<feature type="chain" id="PRO_1000186515" description="Bifunctional protein GlmU">
    <location>
        <begin position="1"/>
        <end position="456"/>
    </location>
</feature>
<feature type="region of interest" description="Pyrophosphorylase" evidence="1">
    <location>
        <begin position="1"/>
        <end position="229"/>
    </location>
</feature>
<feature type="region of interest" description="Linker" evidence="1">
    <location>
        <begin position="230"/>
        <end position="250"/>
    </location>
</feature>
<feature type="region of interest" description="N-acetyltransferase" evidence="1">
    <location>
        <begin position="251"/>
        <end position="456"/>
    </location>
</feature>
<feature type="active site" description="Proton acceptor" evidence="1">
    <location>
        <position position="363"/>
    </location>
</feature>
<feature type="binding site" evidence="1">
    <location>
        <begin position="11"/>
        <end position="14"/>
    </location>
    <ligand>
        <name>UDP-N-acetyl-alpha-D-glucosamine</name>
        <dbReference type="ChEBI" id="CHEBI:57705"/>
    </ligand>
</feature>
<feature type="binding site" evidence="1">
    <location>
        <position position="25"/>
    </location>
    <ligand>
        <name>UDP-N-acetyl-alpha-D-glucosamine</name>
        <dbReference type="ChEBI" id="CHEBI:57705"/>
    </ligand>
</feature>
<feature type="binding site" evidence="1">
    <location>
        <position position="76"/>
    </location>
    <ligand>
        <name>UDP-N-acetyl-alpha-D-glucosamine</name>
        <dbReference type="ChEBI" id="CHEBI:57705"/>
    </ligand>
</feature>
<feature type="binding site" evidence="1">
    <location>
        <begin position="81"/>
        <end position="82"/>
    </location>
    <ligand>
        <name>UDP-N-acetyl-alpha-D-glucosamine</name>
        <dbReference type="ChEBI" id="CHEBI:57705"/>
    </ligand>
</feature>
<feature type="binding site" evidence="1">
    <location>
        <begin position="103"/>
        <end position="105"/>
    </location>
    <ligand>
        <name>UDP-N-acetyl-alpha-D-glucosamine</name>
        <dbReference type="ChEBI" id="CHEBI:57705"/>
    </ligand>
</feature>
<feature type="binding site" evidence="1">
    <location>
        <position position="105"/>
    </location>
    <ligand>
        <name>Mg(2+)</name>
        <dbReference type="ChEBI" id="CHEBI:18420"/>
    </ligand>
</feature>
<feature type="binding site" evidence="1">
    <location>
        <position position="140"/>
    </location>
    <ligand>
        <name>UDP-N-acetyl-alpha-D-glucosamine</name>
        <dbReference type="ChEBI" id="CHEBI:57705"/>
    </ligand>
</feature>
<feature type="binding site" evidence="1">
    <location>
        <position position="154"/>
    </location>
    <ligand>
        <name>UDP-N-acetyl-alpha-D-glucosamine</name>
        <dbReference type="ChEBI" id="CHEBI:57705"/>
    </ligand>
</feature>
<feature type="binding site" evidence="1">
    <location>
        <position position="169"/>
    </location>
    <ligand>
        <name>UDP-N-acetyl-alpha-D-glucosamine</name>
        <dbReference type="ChEBI" id="CHEBI:57705"/>
    </ligand>
</feature>
<feature type="binding site" evidence="1">
    <location>
        <position position="227"/>
    </location>
    <ligand>
        <name>Mg(2+)</name>
        <dbReference type="ChEBI" id="CHEBI:18420"/>
    </ligand>
</feature>
<feature type="binding site" evidence="1">
    <location>
        <position position="227"/>
    </location>
    <ligand>
        <name>UDP-N-acetyl-alpha-D-glucosamine</name>
        <dbReference type="ChEBI" id="CHEBI:57705"/>
    </ligand>
</feature>
<feature type="binding site" evidence="1">
    <location>
        <position position="333"/>
    </location>
    <ligand>
        <name>UDP-N-acetyl-alpha-D-glucosamine</name>
        <dbReference type="ChEBI" id="CHEBI:57705"/>
    </ligand>
</feature>
<feature type="binding site" evidence="1">
    <location>
        <position position="351"/>
    </location>
    <ligand>
        <name>UDP-N-acetyl-alpha-D-glucosamine</name>
        <dbReference type="ChEBI" id="CHEBI:57705"/>
    </ligand>
</feature>
<feature type="binding site" evidence="1">
    <location>
        <position position="366"/>
    </location>
    <ligand>
        <name>UDP-N-acetyl-alpha-D-glucosamine</name>
        <dbReference type="ChEBI" id="CHEBI:57705"/>
    </ligand>
</feature>
<feature type="binding site" evidence="1">
    <location>
        <position position="377"/>
    </location>
    <ligand>
        <name>UDP-N-acetyl-alpha-D-glucosamine</name>
        <dbReference type="ChEBI" id="CHEBI:57705"/>
    </ligand>
</feature>
<feature type="binding site" evidence="1">
    <location>
        <position position="380"/>
    </location>
    <ligand>
        <name>acetyl-CoA</name>
        <dbReference type="ChEBI" id="CHEBI:57288"/>
    </ligand>
</feature>
<feature type="binding site" evidence="1">
    <location>
        <begin position="386"/>
        <end position="387"/>
    </location>
    <ligand>
        <name>acetyl-CoA</name>
        <dbReference type="ChEBI" id="CHEBI:57288"/>
    </ligand>
</feature>
<feature type="binding site" evidence="1">
    <location>
        <position position="405"/>
    </location>
    <ligand>
        <name>acetyl-CoA</name>
        <dbReference type="ChEBI" id="CHEBI:57288"/>
    </ligand>
</feature>
<feature type="binding site" evidence="1">
    <location>
        <position position="423"/>
    </location>
    <ligand>
        <name>acetyl-CoA</name>
        <dbReference type="ChEBI" id="CHEBI:57288"/>
    </ligand>
</feature>
<feature type="binding site" evidence="1">
    <location>
        <position position="440"/>
    </location>
    <ligand>
        <name>acetyl-CoA</name>
        <dbReference type="ChEBI" id="CHEBI:57288"/>
    </ligand>
</feature>
<proteinExistence type="inferred from homology"/>
<protein>
    <recommendedName>
        <fullName evidence="1">Bifunctional protein GlmU</fullName>
    </recommendedName>
    <domain>
        <recommendedName>
            <fullName evidence="1">UDP-N-acetylglucosamine pyrophosphorylase</fullName>
            <ecNumber evidence="1">2.7.7.23</ecNumber>
        </recommendedName>
        <alternativeName>
            <fullName evidence="1">N-acetylglucosamine-1-phosphate uridyltransferase</fullName>
        </alternativeName>
    </domain>
    <domain>
        <recommendedName>
            <fullName evidence="1">Glucosamine-1-phosphate N-acetyltransferase</fullName>
            <ecNumber evidence="1">2.3.1.157</ecNumber>
        </recommendedName>
    </domain>
</protein>
<gene>
    <name evidence="1" type="primary">glmU</name>
    <name type="ordered locus">YPTS_4182</name>
</gene>
<reference key="1">
    <citation type="submission" date="2008-04" db="EMBL/GenBank/DDBJ databases">
        <title>Complete sequence of Yersinia pseudotuberculosis PB1/+.</title>
        <authorList>
            <person name="Copeland A."/>
            <person name="Lucas S."/>
            <person name="Lapidus A."/>
            <person name="Glavina del Rio T."/>
            <person name="Dalin E."/>
            <person name="Tice H."/>
            <person name="Bruce D."/>
            <person name="Goodwin L."/>
            <person name="Pitluck S."/>
            <person name="Munk A.C."/>
            <person name="Brettin T."/>
            <person name="Detter J.C."/>
            <person name="Han C."/>
            <person name="Tapia R."/>
            <person name="Schmutz J."/>
            <person name="Larimer F."/>
            <person name="Land M."/>
            <person name="Hauser L."/>
            <person name="Challacombe J.F."/>
            <person name="Green L."/>
            <person name="Lindler L.E."/>
            <person name="Nikolich M.P."/>
            <person name="Richardson P."/>
        </authorList>
    </citation>
    <scope>NUCLEOTIDE SEQUENCE [LARGE SCALE GENOMIC DNA]</scope>
    <source>
        <strain>PB1/+</strain>
    </source>
</reference>
<comment type="function">
    <text evidence="1">Catalyzes the last two sequential reactions in the de novo biosynthetic pathway for UDP-N-acetylglucosamine (UDP-GlcNAc). The C-terminal domain catalyzes the transfer of acetyl group from acetyl coenzyme A to glucosamine-1-phosphate (GlcN-1-P) to produce N-acetylglucosamine-1-phosphate (GlcNAc-1-P), which is converted into UDP-GlcNAc by the transfer of uridine 5-monophosphate (from uridine 5-triphosphate), a reaction catalyzed by the N-terminal domain.</text>
</comment>
<comment type="catalytic activity">
    <reaction evidence="1">
        <text>alpha-D-glucosamine 1-phosphate + acetyl-CoA = N-acetyl-alpha-D-glucosamine 1-phosphate + CoA + H(+)</text>
        <dbReference type="Rhea" id="RHEA:13725"/>
        <dbReference type="ChEBI" id="CHEBI:15378"/>
        <dbReference type="ChEBI" id="CHEBI:57287"/>
        <dbReference type="ChEBI" id="CHEBI:57288"/>
        <dbReference type="ChEBI" id="CHEBI:57776"/>
        <dbReference type="ChEBI" id="CHEBI:58516"/>
        <dbReference type="EC" id="2.3.1.157"/>
    </reaction>
</comment>
<comment type="catalytic activity">
    <reaction evidence="1">
        <text>N-acetyl-alpha-D-glucosamine 1-phosphate + UTP + H(+) = UDP-N-acetyl-alpha-D-glucosamine + diphosphate</text>
        <dbReference type="Rhea" id="RHEA:13509"/>
        <dbReference type="ChEBI" id="CHEBI:15378"/>
        <dbReference type="ChEBI" id="CHEBI:33019"/>
        <dbReference type="ChEBI" id="CHEBI:46398"/>
        <dbReference type="ChEBI" id="CHEBI:57705"/>
        <dbReference type="ChEBI" id="CHEBI:57776"/>
        <dbReference type="EC" id="2.7.7.23"/>
    </reaction>
</comment>
<comment type="cofactor">
    <cofactor evidence="1">
        <name>Mg(2+)</name>
        <dbReference type="ChEBI" id="CHEBI:18420"/>
    </cofactor>
    <text evidence="1">Binds 1 Mg(2+) ion per subunit.</text>
</comment>
<comment type="pathway">
    <text evidence="1">Nucleotide-sugar biosynthesis; UDP-N-acetyl-alpha-D-glucosamine biosynthesis; N-acetyl-alpha-D-glucosamine 1-phosphate from alpha-D-glucosamine 6-phosphate (route II): step 2/2.</text>
</comment>
<comment type="pathway">
    <text evidence="1">Nucleotide-sugar biosynthesis; UDP-N-acetyl-alpha-D-glucosamine biosynthesis; UDP-N-acetyl-alpha-D-glucosamine from N-acetyl-alpha-D-glucosamine 1-phosphate: step 1/1.</text>
</comment>
<comment type="pathway">
    <text evidence="1">Bacterial outer membrane biogenesis; LPS lipid A biosynthesis.</text>
</comment>
<comment type="subunit">
    <text evidence="1">Homotrimer.</text>
</comment>
<comment type="subcellular location">
    <subcellularLocation>
        <location evidence="1">Cytoplasm</location>
    </subcellularLocation>
</comment>
<comment type="similarity">
    <text evidence="1">In the N-terminal section; belongs to the N-acetylglucosamine-1-phosphate uridyltransferase family.</text>
</comment>
<comment type="similarity">
    <text evidence="1">In the C-terminal section; belongs to the transferase hexapeptide repeat family.</text>
</comment>
<dbReference type="EC" id="2.7.7.23" evidence="1"/>
<dbReference type="EC" id="2.3.1.157" evidence="1"/>
<dbReference type="EMBL" id="CP001048">
    <property type="protein sequence ID" value="ACC91125.1"/>
    <property type="molecule type" value="Genomic_DNA"/>
</dbReference>
<dbReference type="RefSeq" id="WP_002215550.1">
    <property type="nucleotide sequence ID" value="NZ_CP009780.1"/>
</dbReference>
<dbReference type="SMR" id="B2K849"/>
<dbReference type="GeneID" id="57974605"/>
<dbReference type="KEGG" id="ypb:YPTS_4182"/>
<dbReference type="PATRIC" id="fig|502801.10.peg.3653"/>
<dbReference type="UniPathway" id="UPA00113">
    <property type="reaction ID" value="UER00532"/>
</dbReference>
<dbReference type="UniPathway" id="UPA00113">
    <property type="reaction ID" value="UER00533"/>
</dbReference>
<dbReference type="UniPathway" id="UPA00973"/>
<dbReference type="GO" id="GO:0005737">
    <property type="term" value="C:cytoplasm"/>
    <property type="evidence" value="ECO:0007669"/>
    <property type="project" value="UniProtKB-SubCell"/>
</dbReference>
<dbReference type="GO" id="GO:0016020">
    <property type="term" value="C:membrane"/>
    <property type="evidence" value="ECO:0007669"/>
    <property type="project" value="GOC"/>
</dbReference>
<dbReference type="GO" id="GO:0019134">
    <property type="term" value="F:glucosamine-1-phosphate N-acetyltransferase activity"/>
    <property type="evidence" value="ECO:0007669"/>
    <property type="project" value="UniProtKB-UniRule"/>
</dbReference>
<dbReference type="GO" id="GO:0000287">
    <property type="term" value="F:magnesium ion binding"/>
    <property type="evidence" value="ECO:0007669"/>
    <property type="project" value="UniProtKB-UniRule"/>
</dbReference>
<dbReference type="GO" id="GO:0003977">
    <property type="term" value="F:UDP-N-acetylglucosamine diphosphorylase activity"/>
    <property type="evidence" value="ECO:0007669"/>
    <property type="project" value="UniProtKB-UniRule"/>
</dbReference>
<dbReference type="GO" id="GO:0000902">
    <property type="term" value="P:cell morphogenesis"/>
    <property type="evidence" value="ECO:0007669"/>
    <property type="project" value="UniProtKB-UniRule"/>
</dbReference>
<dbReference type="GO" id="GO:0071555">
    <property type="term" value="P:cell wall organization"/>
    <property type="evidence" value="ECO:0007669"/>
    <property type="project" value="UniProtKB-KW"/>
</dbReference>
<dbReference type="GO" id="GO:0009245">
    <property type="term" value="P:lipid A biosynthetic process"/>
    <property type="evidence" value="ECO:0007669"/>
    <property type="project" value="UniProtKB-UniRule"/>
</dbReference>
<dbReference type="GO" id="GO:0009252">
    <property type="term" value="P:peptidoglycan biosynthetic process"/>
    <property type="evidence" value="ECO:0007669"/>
    <property type="project" value="UniProtKB-UniRule"/>
</dbReference>
<dbReference type="GO" id="GO:0008360">
    <property type="term" value="P:regulation of cell shape"/>
    <property type="evidence" value="ECO:0007669"/>
    <property type="project" value="UniProtKB-KW"/>
</dbReference>
<dbReference type="GO" id="GO:0006048">
    <property type="term" value="P:UDP-N-acetylglucosamine biosynthetic process"/>
    <property type="evidence" value="ECO:0007669"/>
    <property type="project" value="UniProtKB-UniPathway"/>
</dbReference>
<dbReference type="CDD" id="cd02540">
    <property type="entry name" value="GT2_GlmU_N_bac"/>
    <property type="match status" value="1"/>
</dbReference>
<dbReference type="CDD" id="cd03353">
    <property type="entry name" value="LbH_GlmU_C"/>
    <property type="match status" value="1"/>
</dbReference>
<dbReference type="FunFam" id="2.160.10.10:FF:000011">
    <property type="entry name" value="Bifunctional protein GlmU"/>
    <property type="match status" value="1"/>
</dbReference>
<dbReference type="FunFam" id="3.90.550.10:FF:000006">
    <property type="entry name" value="Bifunctional protein GlmU"/>
    <property type="match status" value="1"/>
</dbReference>
<dbReference type="Gene3D" id="2.160.10.10">
    <property type="entry name" value="Hexapeptide repeat proteins"/>
    <property type="match status" value="1"/>
</dbReference>
<dbReference type="Gene3D" id="3.90.550.10">
    <property type="entry name" value="Spore Coat Polysaccharide Biosynthesis Protein SpsA, Chain A"/>
    <property type="match status" value="1"/>
</dbReference>
<dbReference type="HAMAP" id="MF_01631">
    <property type="entry name" value="GlmU"/>
    <property type="match status" value="1"/>
</dbReference>
<dbReference type="InterPro" id="IPR005882">
    <property type="entry name" value="Bifunctional_GlmU"/>
</dbReference>
<dbReference type="InterPro" id="IPR050065">
    <property type="entry name" value="GlmU-like"/>
</dbReference>
<dbReference type="InterPro" id="IPR038009">
    <property type="entry name" value="GlmU_C_LbH"/>
</dbReference>
<dbReference type="InterPro" id="IPR001451">
    <property type="entry name" value="Hexapep"/>
</dbReference>
<dbReference type="InterPro" id="IPR018357">
    <property type="entry name" value="Hexapep_transf_CS"/>
</dbReference>
<dbReference type="InterPro" id="IPR025877">
    <property type="entry name" value="MobA-like_NTP_Trfase"/>
</dbReference>
<dbReference type="InterPro" id="IPR029044">
    <property type="entry name" value="Nucleotide-diphossugar_trans"/>
</dbReference>
<dbReference type="InterPro" id="IPR011004">
    <property type="entry name" value="Trimer_LpxA-like_sf"/>
</dbReference>
<dbReference type="NCBIfam" id="TIGR01173">
    <property type="entry name" value="glmU"/>
    <property type="match status" value="1"/>
</dbReference>
<dbReference type="NCBIfam" id="NF006986">
    <property type="entry name" value="PRK09451.1"/>
    <property type="match status" value="1"/>
</dbReference>
<dbReference type="PANTHER" id="PTHR43584:SF3">
    <property type="entry name" value="BIFUNCTIONAL PROTEIN GLMU"/>
    <property type="match status" value="1"/>
</dbReference>
<dbReference type="PANTHER" id="PTHR43584">
    <property type="entry name" value="NUCLEOTIDYL TRANSFERASE"/>
    <property type="match status" value="1"/>
</dbReference>
<dbReference type="Pfam" id="PF00132">
    <property type="entry name" value="Hexapep"/>
    <property type="match status" value="1"/>
</dbReference>
<dbReference type="Pfam" id="PF12804">
    <property type="entry name" value="NTP_transf_3"/>
    <property type="match status" value="1"/>
</dbReference>
<dbReference type="SUPFAM" id="SSF53448">
    <property type="entry name" value="Nucleotide-diphospho-sugar transferases"/>
    <property type="match status" value="1"/>
</dbReference>
<dbReference type="SUPFAM" id="SSF51161">
    <property type="entry name" value="Trimeric LpxA-like enzymes"/>
    <property type="match status" value="1"/>
</dbReference>
<dbReference type="PROSITE" id="PS00101">
    <property type="entry name" value="HEXAPEP_TRANSFERASES"/>
    <property type="match status" value="1"/>
</dbReference>
<name>GLMU_YERPB</name>
<keyword id="KW-0012">Acyltransferase</keyword>
<keyword id="KW-0133">Cell shape</keyword>
<keyword id="KW-0961">Cell wall biogenesis/degradation</keyword>
<keyword id="KW-0963">Cytoplasm</keyword>
<keyword id="KW-0460">Magnesium</keyword>
<keyword id="KW-0479">Metal-binding</keyword>
<keyword id="KW-0511">Multifunctional enzyme</keyword>
<keyword id="KW-0548">Nucleotidyltransferase</keyword>
<keyword id="KW-0573">Peptidoglycan synthesis</keyword>
<keyword id="KW-0677">Repeat</keyword>
<keyword id="KW-0808">Transferase</keyword>
<evidence type="ECO:0000255" key="1">
    <source>
        <dbReference type="HAMAP-Rule" id="MF_01631"/>
    </source>
</evidence>
<sequence>MSNSSMSVVILAAGKGTRMYSDLPKVLHPLAGKPMVQHVIDAAMKLGAQHVHLVYGHGGELLKKTLADPSLNWVLQAEQLGTGHAMQQAAPHFADDEDILMLYGDVPLISVDTLQRLLAAKPEGGIGLLTVKLDNPSGYGRIVRENGDVVGIVEHKDASDAQREINEINTGILVANGRDLKRWLSLLDNNNAQGEFYITDIIALAHADGKKIATVHPTRLSEVEGVNNRLQLSALERVFQTEQAEKLLLAGVMLLDPSRFDLRGELTHGRDITIDTNVIIEGHVILGDRVRIGTGCVLKNCVIGDDSEISPYTVLEDARLDANCTVGPFARLRPGAELAEGAHVGNFVEIKKARLGKGSKAGHLSYLGDAEIGAGVNIGAGTITCNYDGANKFKTIIGDDVFVGSDTQLVAPVTVANGATIGAGTTVTRDVAENELVISRVKQVHIQGWKRPVKKK</sequence>
<accession>B2K849</accession>
<organism>
    <name type="scientific">Yersinia pseudotuberculosis serotype IB (strain PB1/+)</name>
    <dbReference type="NCBI Taxonomy" id="502801"/>
    <lineage>
        <taxon>Bacteria</taxon>
        <taxon>Pseudomonadati</taxon>
        <taxon>Pseudomonadota</taxon>
        <taxon>Gammaproteobacteria</taxon>
        <taxon>Enterobacterales</taxon>
        <taxon>Yersiniaceae</taxon>
        <taxon>Yersinia</taxon>
    </lineage>
</organism>